<sequence length="69" mass="8090">MKAKEIRDLTTSEIEEQIKSSKEELFNLRFQLATGQLEETARIRTVRKTIARLKTVAREREIEQSKANQ</sequence>
<gene>
    <name evidence="1" type="primary">rpmC</name>
    <name type="ordered locus">SaurJH1_2310</name>
</gene>
<protein>
    <recommendedName>
        <fullName evidence="1">Large ribosomal subunit protein uL29</fullName>
    </recommendedName>
    <alternativeName>
        <fullName evidence="2">50S ribosomal protein L29</fullName>
    </alternativeName>
</protein>
<feature type="chain" id="PRO_1000079909" description="Large ribosomal subunit protein uL29">
    <location>
        <begin position="1"/>
        <end position="69"/>
    </location>
</feature>
<comment type="similarity">
    <text evidence="1">Belongs to the universal ribosomal protein uL29 family.</text>
</comment>
<reference key="1">
    <citation type="submission" date="2007-06" db="EMBL/GenBank/DDBJ databases">
        <title>Complete sequence of chromosome of Staphylococcus aureus subsp. aureus JH1.</title>
        <authorList>
            <consortium name="US DOE Joint Genome Institute"/>
            <person name="Copeland A."/>
            <person name="Lucas S."/>
            <person name="Lapidus A."/>
            <person name="Barry K."/>
            <person name="Detter J.C."/>
            <person name="Glavina del Rio T."/>
            <person name="Hammon N."/>
            <person name="Israni S."/>
            <person name="Dalin E."/>
            <person name="Tice H."/>
            <person name="Pitluck S."/>
            <person name="Chain P."/>
            <person name="Malfatti S."/>
            <person name="Shin M."/>
            <person name="Vergez L."/>
            <person name="Schmutz J."/>
            <person name="Larimer F."/>
            <person name="Land M."/>
            <person name="Hauser L."/>
            <person name="Kyrpides N."/>
            <person name="Ivanova N."/>
            <person name="Tomasz A."/>
            <person name="Richardson P."/>
        </authorList>
    </citation>
    <scope>NUCLEOTIDE SEQUENCE [LARGE SCALE GENOMIC DNA]</scope>
    <source>
        <strain>JH1</strain>
    </source>
</reference>
<accession>A6U3W7</accession>
<organism>
    <name type="scientific">Staphylococcus aureus (strain JH1)</name>
    <dbReference type="NCBI Taxonomy" id="359787"/>
    <lineage>
        <taxon>Bacteria</taxon>
        <taxon>Bacillati</taxon>
        <taxon>Bacillota</taxon>
        <taxon>Bacilli</taxon>
        <taxon>Bacillales</taxon>
        <taxon>Staphylococcaceae</taxon>
        <taxon>Staphylococcus</taxon>
    </lineage>
</organism>
<name>RL29_STAA2</name>
<evidence type="ECO:0000255" key="1">
    <source>
        <dbReference type="HAMAP-Rule" id="MF_00374"/>
    </source>
</evidence>
<evidence type="ECO:0000305" key="2"/>
<proteinExistence type="inferred from homology"/>
<dbReference type="EMBL" id="CP000736">
    <property type="protein sequence ID" value="ABR53135.1"/>
    <property type="molecule type" value="Genomic_DNA"/>
</dbReference>
<dbReference type="SMR" id="A6U3W7"/>
<dbReference type="KEGG" id="sah:SaurJH1_2310"/>
<dbReference type="HOGENOM" id="CLU_158491_5_2_9"/>
<dbReference type="GO" id="GO:0022625">
    <property type="term" value="C:cytosolic large ribosomal subunit"/>
    <property type="evidence" value="ECO:0007669"/>
    <property type="project" value="TreeGrafter"/>
</dbReference>
<dbReference type="GO" id="GO:0003735">
    <property type="term" value="F:structural constituent of ribosome"/>
    <property type="evidence" value="ECO:0007669"/>
    <property type="project" value="InterPro"/>
</dbReference>
<dbReference type="GO" id="GO:0006412">
    <property type="term" value="P:translation"/>
    <property type="evidence" value="ECO:0007669"/>
    <property type="project" value="UniProtKB-UniRule"/>
</dbReference>
<dbReference type="CDD" id="cd00427">
    <property type="entry name" value="Ribosomal_L29_HIP"/>
    <property type="match status" value="1"/>
</dbReference>
<dbReference type="FunFam" id="1.10.287.310:FF:000001">
    <property type="entry name" value="50S ribosomal protein L29"/>
    <property type="match status" value="1"/>
</dbReference>
<dbReference type="Gene3D" id="1.10.287.310">
    <property type="match status" value="1"/>
</dbReference>
<dbReference type="HAMAP" id="MF_00374">
    <property type="entry name" value="Ribosomal_uL29"/>
    <property type="match status" value="1"/>
</dbReference>
<dbReference type="InterPro" id="IPR050063">
    <property type="entry name" value="Ribosomal_protein_uL29"/>
</dbReference>
<dbReference type="InterPro" id="IPR001854">
    <property type="entry name" value="Ribosomal_uL29"/>
</dbReference>
<dbReference type="InterPro" id="IPR036049">
    <property type="entry name" value="Ribosomal_uL29_sf"/>
</dbReference>
<dbReference type="NCBIfam" id="TIGR00012">
    <property type="entry name" value="L29"/>
    <property type="match status" value="1"/>
</dbReference>
<dbReference type="PANTHER" id="PTHR10916">
    <property type="entry name" value="60S RIBOSOMAL PROTEIN L35/50S RIBOSOMAL PROTEIN L29"/>
    <property type="match status" value="1"/>
</dbReference>
<dbReference type="PANTHER" id="PTHR10916:SF0">
    <property type="entry name" value="LARGE RIBOSOMAL SUBUNIT PROTEIN UL29C"/>
    <property type="match status" value="1"/>
</dbReference>
<dbReference type="Pfam" id="PF00831">
    <property type="entry name" value="Ribosomal_L29"/>
    <property type="match status" value="1"/>
</dbReference>
<dbReference type="SUPFAM" id="SSF46561">
    <property type="entry name" value="Ribosomal protein L29 (L29p)"/>
    <property type="match status" value="1"/>
</dbReference>
<keyword id="KW-0687">Ribonucleoprotein</keyword>
<keyword id="KW-0689">Ribosomal protein</keyword>